<comment type="function">
    <text>Tubulin is the major constituent of microtubules, a cylinder consisting of laterally associated linear protofilaments composed of alpha- and beta-tubulin heterodimers. Microtubules grow by the addition of GTP-tubulin dimers to the microtubule end, where a stabilizing cap forms. Below the cap, tubulin dimers are in GDP-bound state, owing to GTPase activity of alpha-tubulin.</text>
</comment>
<comment type="cofactor">
    <cofactor evidence="1">
        <name>Mg(2+)</name>
        <dbReference type="ChEBI" id="CHEBI:18420"/>
    </cofactor>
</comment>
<comment type="subunit">
    <text>Dimer of alpha and beta chains. A typical microtubule is a hollow water-filled tube with an outer diameter of 25 nm and an inner diameter of 15 nM. Alpha-beta heterodimers associate head-to-tail to form protofilaments running lengthwise along the microtubule wall with the beta-tubulin subunit facing the microtubule plus end conferring a structural polarity. Microtubules usually have 13 protofilaments but different protofilament numbers can be found in some organisms and specialized cells.</text>
</comment>
<comment type="subcellular location">
    <subcellularLocation>
        <location>Cytoplasm</location>
        <location>Cytoskeleton</location>
    </subcellularLocation>
</comment>
<comment type="similarity">
    <text evidence="4">Belongs to the tubulin family.</text>
</comment>
<reference key="1">
    <citation type="submission" date="2003-07" db="EMBL/GenBank/DDBJ databases">
        <title>Cloning and expression of nine tubulin genes from elongating cotton fiber cells.</title>
        <authorList>
            <person name="Feng J.-X."/>
            <person name="Wei G."/>
            <person name="Wang L."/>
            <person name="Ji S.-J."/>
            <person name="Zhang T.-Z."/>
            <person name="Zhu Y.-X."/>
        </authorList>
    </citation>
    <scope>NUCLEOTIDE SEQUENCE [MRNA]</scope>
</reference>
<proteinExistence type="evidence at transcript level"/>
<feature type="chain" id="PRO_0000048351" description="Tubulin beta-9 chain">
    <location>
        <begin position="1"/>
        <end position="445"/>
    </location>
</feature>
<feature type="region of interest" description="Disordered" evidence="3">
    <location>
        <begin position="423"/>
        <end position="445"/>
    </location>
</feature>
<feature type="compositionally biased region" description="Acidic residues" evidence="3">
    <location>
        <begin position="429"/>
        <end position="445"/>
    </location>
</feature>
<feature type="binding site" evidence="2">
    <location>
        <position position="11"/>
    </location>
    <ligand>
        <name>GTP</name>
        <dbReference type="ChEBI" id="CHEBI:37565"/>
    </ligand>
</feature>
<feature type="binding site" evidence="1">
    <location>
        <position position="69"/>
    </location>
    <ligand>
        <name>GTP</name>
        <dbReference type="ChEBI" id="CHEBI:37565"/>
    </ligand>
</feature>
<feature type="binding site" evidence="1">
    <location>
        <position position="69"/>
    </location>
    <ligand>
        <name>Mg(2+)</name>
        <dbReference type="ChEBI" id="CHEBI:18420"/>
    </ligand>
</feature>
<feature type="binding site" evidence="2">
    <location>
        <position position="138"/>
    </location>
    <ligand>
        <name>GTP</name>
        <dbReference type="ChEBI" id="CHEBI:37565"/>
    </ligand>
</feature>
<feature type="binding site" evidence="2">
    <location>
        <position position="142"/>
    </location>
    <ligand>
        <name>GTP</name>
        <dbReference type="ChEBI" id="CHEBI:37565"/>
    </ligand>
</feature>
<feature type="binding site" evidence="2">
    <location>
        <position position="143"/>
    </location>
    <ligand>
        <name>GTP</name>
        <dbReference type="ChEBI" id="CHEBI:37565"/>
    </ligand>
</feature>
<feature type="binding site" evidence="2">
    <location>
        <position position="144"/>
    </location>
    <ligand>
        <name>GTP</name>
        <dbReference type="ChEBI" id="CHEBI:37565"/>
    </ligand>
</feature>
<feature type="binding site" evidence="2">
    <location>
        <position position="204"/>
    </location>
    <ligand>
        <name>GTP</name>
        <dbReference type="ChEBI" id="CHEBI:37565"/>
    </ligand>
</feature>
<feature type="binding site" evidence="2">
    <location>
        <position position="226"/>
    </location>
    <ligand>
        <name>GTP</name>
        <dbReference type="ChEBI" id="CHEBI:37565"/>
    </ligand>
</feature>
<keyword id="KW-0963">Cytoplasm</keyword>
<keyword id="KW-0206">Cytoskeleton</keyword>
<keyword id="KW-0342">GTP-binding</keyword>
<keyword id="KW-0460">Magnesium</keyword>
<keyword id="KW-0479">Metal-binding</keyword>
<keyword id="KW-0493">Microtubule</keyword>
<keyword id="KW-0547">Nucleotide-binding</keyword>
<keyword id="KW-1185">Reference proteome</keyword>
<protein>
    <recommendedName>
        <fullName>Tubulin beta-9 chain</fullName>
    </recommendedName>
    <alternativeName>
        <fullName>Beta-9-tubulin</fullName>
    </alternativeName>
</protein>
<organism>
    <name type="scientific">Gossypium hirsutum</name>
    <name type="common">Upland cotton</name>
    <name type="synonym">Gossypium mexicanum</name>
    <dbReference type="NCBI Taxonomy" id="3635"/>
    <lineage>
        <taxon>Eukaryota</taxon>
        <taxon>Viridiplantae</taxon>
        <taxon>Streptophyta</taxon>
        <taxon>Embryophyta</taxon>
        <taxon>Tracheophyta</taxon>
        <taxon>Spermatophyta</taxon>
        <taxon>Magnoliopsida</taxon>
        <taxon>eudicotyledons</taxon>
        <taxon>Gunneridae</taxon>
        <taxon>Pentapetalae</taxon>
        <taxon>rosids</taxon>
        <taxon>malvids</taxon>
        <taxon>Malvales</taxon>
        <taxon>Malvaceae</taxon>
        <taxon>Malvoideae</taxon>
        <taxon>Gossypium</taxon>
    </lineage>
</organism>
<dbReference type="EMBL" id="AY345610">
    <property type="protein sequence ID" value="AAQ92668.1"/>
    <property type="molecule type" value="mRNA"/>
</dbReference>
<dbReference type="RefSeq" id="NP_001314197.1">
    <property type="nucleotide sequence ID" value="NM_001327268.1"/>
</dbReference>
<dbReference type="SMR" id="Q6VAF4"/>
<dbReference type="STRING" id="3635.Q6VAF4"/>
<dbReference type="PaxDb" id="3635-Q6VAF4"/>
<dbReference type="GeneID" id="107926975"/>
<dbReference type="KEGG" id="ghi:107926975"/>
<dbReference type="OrthoDB" id="16588at41938"/>
<dbReference type="Proteomes" id="UP000189702">
    <property type="component" value="Unplaced"/>
</dbReference>
<dbReference type="GO" id="GO:0005737">
    <property type="term" value="C:cytoplasm"/>
    <property type="evidence" value="ECO:0000318"/>
    <property type="project" value="GO_Central"/>
</dbReference>
<dbReference type="GO" id="GO:0005874">
    <property type="term" value="C:microtubule"/>
    <property type="evidence" value="ECO:0000318"/>
    <property type="project" value="GO_Central"/>
</dbReference>
<dbReference type="GO" id="GO:0005525">
    <property type="term" value="F:GTP binding"/>
    <property type="evidence" value="ECO:0000318"/>
    <property type="project" value="GO_Central"/>
</dbReference>
<dbReference type="GO" id="GO:0003924">
    <property type="term" value="F:GTPase activity"/>
    <property type="evidence" value="ECO:0007669"/>
    <property type="project" value="InterPro"/>
</dbReference>
<dbReference type="GO" id="GO:0046872">
    <property type="term" value="F:metal ion binding"/>
    <property type="evidence" value="ECO:0007669"/>
    <property type="project" value="UniProtKB-KW"/>
</dbReference>
<dbReference type="GO" id="GO:0005200">
    <property type="term" value="F:structural constituent of cytoskeleton"/>
    <property type="evidence" value="ECO:0000318"/>
    <property type="project" value="GO_Central"/>
</dbReference>
<dbReference type="GO" id="GO:0000226">
    <property type="term" value="P:microtubule cytoskeleton organization"/>
    <property type="evidence" value="ECO:0000318"/>
    <property type="project" value="GO_Central"/>
</dbReference>
<dbReference type="GO" id="GO:0000278">
    <property type="term" value="P:mitotic cell cycle"/>
    <property type="evidence" value="ECO:0000318"/>
    <property type="project" value="GO_Central"/>
</dbReference>
<dbReference type="CDD" id="cd02187">
    <property type="entry name" value="beta_tubulin"/>
    <property type="match status" value="1"/>
</dbReference>
<dbReference type="FunFam" id="1.10.287.600:FF:000002">
    <property type="entry name" value="Tubulin beta chain"/>
    <property type="match status" value="1"/>
</dbReference>
<dbReference type="FunFam" id="3.30.1330.20:FF:000002">
    <property type="entry name" value="Tubulin beta chain"/>
    <property type="match status" value="1"/>
</dbReference>
<dbReference type="FunFam" id="3.40.50.1440:FF:000005">
    <property type="entry name" value="Tubulin beta chain"/>
    <property type="match status" value="1"/>
</dbReference>
<dbReference type="Gene3D" id="1.10.287.600">
    <property type="entry name" value="Helix hairpin bin"/>
    <property type="match status" value="1"/>
</dbReference>
<dbReference type="Gene3D" id="3.30.1330.20">
    <property type="entry name" value="Tubulin/FtsZ, C-terminal domain"/>
    <property type="match status" value="1"/>
</dbReference>
<dbReference type="Gene3D" id="3.40.50.1440">
    <property type="entry name" value="Tubulin/FtsZ, GTPase domain"/>
    <property type="match status" value="1"/>
</dbReference>
<dbReference type="InterPro" id="IPR013838">
    <property type="entry name" value="Beta-tubulin_BS"/>
</dbReference>
<dbReference type="InterPro" id="IPR002453">
    <property type="entry name" value="Beta_tubulin"/>
</dbReference>
<dbReference type="InterPro" id="IPR008280">
    <property type="entry name" value="Tub_FtsZ_C"/>
</dbReference>
<dbReference type="InterPro" id="IPR000217">
    <property type="entry name" value="Tubulin"/>
</dbReference>
<dbReference type="InterPro" id="IPR037103">
    <property type="entry name" value="Tubulin/FtsZ-like_C"/>
</dbReference>
<dbReference type="InterPro" id="IPR018316">
    <property type="entry name" value="Tubulin/FtsZ_2-layer-sand-dom"/>
</dbReference>
<dbReference type="InterPro" id="IPR036525">
    <property type="entry name" value="Tubulin/FtsZ_GTPase_sf"/>
</dbReference>
<dbReference type="InterPro" id="IPR023123">
    <property type="entry name" value="Tubulin_C"/>
</dbReference>
<dbReference type="InterPro" id="IPR017975">
    <property type="entry name" value="Tubulin_CS"/>
</dbReference>
<dbReference type="InterPro" id="IPR003008">
    <property type="entry name" value="Tubulin_FtsZ_GTPase"/>
</dbReference>
<dbReference type="PANTHER" id="PTHR11588">
    <property type="entry name" value="TUBULIN"/>
    <property type="match status" value="1"/>
</dbReference>
<dbReference type="Pfam" id="PF00091">
    <property type="entry name" value="Tubulin"/>
    <property type="match status" value="1"/>
</dbReference>
<dbReference type="Pfam" id="PF03953">
    <property type="entry name" value="Tubulin_C"/>
    <property type="match status" value="1"/>
</dbReference>
<dbReference type="PRINTS" id="PR01163">
    <property type="entry name" value="BETATUBULIN"/>
</dbReference>
<dbReference type="PRINTS" id="PR01161">
    <property type="entry name" value="TUBULIN"/>
</dbReference>
<dbReference type="SMART" id="SM00864">
    <property type="entry name" value="Tubulin"/>
    <property type="match status" value="1"/>
</dbReference>
<dbReference type="SMART" id="SM00865">
    <property type="entry name" value="Tubulin_C"/>
    <property type="match status" value="1"/>
</dbReference>
<dbReference type="SUPFAM" id="SSF55307">
    <property type="entry name" value="Tubulin C-terminal domain-like"/>
    <property type="match status" value="1"/>
</dbReference>
<dbReference type="SUPFAM" id="SSF52490">
    <property type="entry name" value="Tubulin nucleotide-binding domain-like"/>
    <property type="match status" value="1"/>
</dbReference>
<dbReference type="PROSITE" id="PS00227">
    <property type="entry name" value="TUBULIN"/>
    <property type="match status" value="1"/>
</dbReference>
<dbReference type="PROSITE" id="PS00228">
    <property type="entry name" value="TUBULIN_B_AUTOREG"/>
    <property type="match status" value="1"/>
</dbReference>
<sequence length="445" mass="49943">MREILHIQGGQCGNQIGAKFWEVVCAEHGIDSTGRYGGDSELQLERINVYYNEASCGRFVPRAVLMDLEPGTMDSVRSGPYGQIFRPDNFVFGQSGAGNNWAKGHYTEGAELIDSVLDVVRKEAENCDCLQGFQVCHSLGGGTGSGMGTLLISKIREEYPDRTMLTFSVFPSPKVSDTVVEPYNATLSVHQLVENADECMVLDNEALYDICFRTLKLTTPSFGDLNHLISATMSGVTCCLRFPGQLNSDLRKLAVNLIPFPRLHFFMVGFAPLTSRGSQQYRALTVPELTQQMWDAKNMVCAADPRHGRYLTASAVFRGKMSTKEVDEQMINVQNKNSSYFVEWIPNNVKSTVCDIPPIGLKMASTFIGNSTSIQEMFRRVSEQFTAMFRRKAFLHWYTGEGMDEMEFTEAESDMNDLVSEYQQYQDATADDEEYEEEEEYEAEA</sequence>
<name>TBB9_GOSHI</name>
<evidence type="ECO:0000250" key="1">
    <source>
        <dbReference type="UniProtKB" id="P68363"/>
    </source>
</evidence>
<evidence type="ECO:0000250" key="2">
    <source>
        <dbReference type="UniProtKB" id="Q13509"/>
    </source>
</evidence>
<evidence type="ECO:0000256" key="3">
    <source>
        <dbReference type="SAM" id="MobiDB-lite"/>
    </source>
</evidence>
<evidence type="ECO:0000305" key="4"/>
<accession>Q6VAF4</accession>